<protein>
    <recommendedName>
        <fullName evidence="1">ATP synthase subunit c, chloroplastic</fullName>
    </recommendedName>
    <alternativeName>
        <fullName evidence="1">ATP synthase F(0) sector subunit c</fullName>
    </alternativeName>
    <alternativeName>
        <fullName evidence="1">ATPase subunit III</fullName>
    </alternativeName>
    <alternativeName>
        <fullName evidence="1">F-type ATPase subunit c</fullName>
        <shortName evidence="1">F-ATPase subunit c</shortName>
    </alternativeName>
    <alternativeName>
        <fullName evidence="1">Lipid-binding protein</fullName>
    </alternativeName>
</protein>
<geneLocation type="chloroplast"/>
<name>ATPH_PEA</name>
<feature type="chain" id="PRO_0000112201" description="ATP synthase subunit c, chloroplastic">
    <location>
        <begin position="1"/>
        <end position="81"/>
    </location>
</feature>
<feature type="transmembrane region" description="Helical" evidence="1">
    <location>
        <begin position="3"/>
        <end position="23"/>
    </location>
</feature>
<feature type="transmembrane region" description="Helical" evidence="1">
    <location>
        <begin position="57"/>
        <end position="77"/>
    </location>
</feature>
<feature type="site" description="Reversibly protonated during proton transport" evidence="1">
    <location>
        <position position="61"/>
    </location>
</feature>
<feature type="helix" evidence="2">
    <location>
        <begin position="4"/>
        <end position="20"/>
    </location>
</feature>
<feature type="helix" evidence="2">
    <location>
        <begin position="22"/>
        <end position="41"/>
    </location>
</feature>
<feature type="helix" evidence="2">
    <location>
        <begin position="43"/>
        <end position="45"/>
    </location>
</feature>
<feature type="helix" evidence="2">
    <location>
        <begin position="46"/>
        <end position="75"/>
    </location>
</feature>
<proteinExistence type="evidence at protein level"/>
<sequence length="81" mass="8032">MNPLIAAASVIAAGLAVGLASIGPGVGQGTAAGQAVEGIARQPEAEDKIRGTLLLSLAFMEALTIYGLVVALALLFANPFV</sequence>
<accession>P08212</accession>
<reference key="1">
    <citation type="journal article" date="1987" name="J. Mol. Biol.">
        <title>A gene cluster in the spinach and pea chloroplast genomes encoding one CF1 and three CF0 subunits of the H+-ATP synthase complex and the ribosomal protein S2.</title>
        <authorList>
            <person name="Hudson G.S."/>
            <person name="Mason J.G."/>
            <person name="Holton T.A."/>
            <person name="Koller B."/>
            <person name="Cox G.B."/>
            <person name="Whitfeld P.R."/>
            <person name="Bottomley W."/>
        </authorList>
    </citation>
    <scope>NUCLEOTIDE SEQUENCE [GENOMIC DNA]</scope>
</reference>
<reference key="2">
    <citation type="journal article" date="1990" name="Gene">
        <title>Nucleotide sequence and transcripts of the pea chloroplast gene encoding CF0 subunit III of ATP synthase.</title>
        <authorList>
            <person name="Huttly A.K."/>
            <person name="Plant A.L."/>
            <person name="Phillips A.L."/>
            <person name="Auffret A.D."/>
            <person name="Gray J.C."/>
        </authorList>
    </citation>
    <scope>NUCLEOTIDE SEQUENCE [GENOMIC DNA]</scope>
</reference>
<reference key="3">
    <citation type="journal article" date="1986" name="EMBO J.">
        <title>A sixth subunit of ATP synthase, an F(0) component, is encoded in the pea chloroplast genome.</title>
        <authorList>
            <person name="Cozens A.L."/>
            <person name="Walker J.E."/>
            <person name="Phillips A.L."/>
            <person name="Huttly A.K."/>
            <person name="Gray J.C."/>
        </authorList>
    </citation>
    <scope>PROTEIN SEQUENCE OF 1-32</scope>
</reference>
<keyword id="KW-0002">3D-structure</keyword>
<keyword id="KW-0066">ATP synthesis</keyword>
<keyword id="KW-0138">CF(0)</keyword>
<keyword id="KW-0150">Chloroplast</keyword>
<keyword id="KW-0903">Direct protein sequencing</keyword>
<keyword id="KW-0375">Hydrogen ion transport</keyword>
<keyword id="KW-0406">Ion transport</keyword>
<keyword id="KW-0446">Lipid-binding</keyword>
<keyword id="KW-0472">Membrane</keyword>
<keyword id="KW-0934">Plastid</keyword>
<keyword id="KW-0793">Thylakoid</keyword>
<keyword id="KW-0812">Transmembrane</keyword>
<keyword id="KW-1133">Transmembrane helix</keyword>
<keyword id="KW-0813">Transport</keyword>
<comment type="function">
    <text evidence="1">F(1)F(0) ATP synthase produces ATP from ADP in the presence of a proton or sodium gradient. F-type ATPases consist of two structural domains, F(1) containing the extramembraneous catalytic core and F(0) containing the membrane proton channel, linked together by a central stalk and a peripheral stalk. During catalysis, ATP synthesis in the catalytic domain of F(1) is coupled via a rotary mechanism of the central stalk subunits to proton translocation.</text>
</comment>
<comment type="function">
    <text evidence="1">Key component of the F(0) channel; it plays a direct role in translocation across the membrane. A homomeric c-ring of between 10-14 subunits forms the central stalk rotor element with the F(1) delta and epsilon subunits.</text>
</comment>
<comment type="subunit">
    <text evidence="1">F-type ATPases have 2 components, F(1) - the catalytic core - and F(0) - the membrane proton channel. F(1) has five subunits: alpha(3), beta(3), gamma(1), delta(1), epsilon(1). F(0) has four main subunits: a(1), b(1), b'(1) and c(10-14). The alpha and beta chains form an alternating ring which encloses part of the gamma chain. F(1) is attached to F(0) by a central stalk formed by the gamma and epsilon chains, while a peripheral stalk is formed by the delta, b and b' chains.</text>
</comment>
<comment type="subcellular location">
    <subcellularLocation>
        <location>Plastid</location>
        <location>Chloroplast thylakoid membrane</location>
        <topology>Multi-pass membrane protein</topology>
    </subcellularLocation>
</comment>
<comment type="miscellaneous">
    <text>In plastids the F-type ATPase is also known as CF(1)CF(0).</text>
</comment>
<comment type="similarity">
    <text evidence="1">Belongs to the ATPase C chain family.</text>
</comment>
<gene>
    <name evidence="1" type="primary">atpH</name>
</gene>
<organism>
    <name type="scientific">Pisum sativum</name>
    <name type="common">Garden pea</name>
    <name type="synonym">Lathyrus oleraceus</name>
    <dbReference type="NCBI Taxonomy" id="3888"/>
    <lineage>
        <taxon>Eukaryota</taxon>
        <taxon>Viridiplantae</taxon>
        <taxon>Streptophyta</taxon>
        <taxon>Embryophyta</taxon>
        <taxon>Tracheophyta</taxon>
        <taxon>Spermatophyta</taxon>
        <taxon>Magnoliopsida</taxon>
        <taxon>eudicotyledons</taxon>
        <taxon>Gunneridae</taxon>
        <taxon>Pentapetalae</taxon>
        <taxon>rosids</taxon>
        <taxon>fabids</taxon>
        <taxon>Fabales</taxon>
        <taxon>Fabaceae</taxon>
        <taxon>Papilionoideae</taxon>
        <taxon>50 kb inversion clade</taxon>
        <taxon>NPAAA clade</taxon>
        <taxon>Hologalegina</taxon>
        <taxon>IRL clade</taxon>
        <taxon>Fabeae</taxon>
        <taxon>Pisum</taxon>
    </lineage>
</organism>
<dbReference type="EMBL" id="X05917">
    <property type="protein sequence ID" value="CAA29350.1"/>
    <property type="molecule type" value="Genomic_DNA"/>
</dbReference>
<dbReference type="EMBL" id="M57711">
    <property type="protein sequence ID" value="AAA84541.1"/>
    <property type="molecule type" value="Genomic_DNA"/>
</dbReference>
<dbReference type="PIR" id="S14424">
    <property type="entry name" value="LWPMA"/>
</dbReference>
<dbReference type="RefSeq" id="YP_003587563.1">
    <property type="nucleotide sequence ID" value="NC_014057.1"/>
</dbReference>
<dbReference type="PDB" id="3V3C">
    <property type="method" value="X-ray"/>
    <property type="resolution" value="3.40 A"/>
    <property type="chains" value="A/B/C/D/E/F/G/H/I/J/K/L/M/N=3-81"/>
</dbReference>
<dbReference type="PDBsum" id="3V3C"/>
<dbReference type="SMR" id="P08212"/>
<dbReference type="EnsemblPlants" id="Psat1g099200.1">
    <property type="protein sequence ID" value="Psat1g099200.1.cds1"/>
    <property type="gene ID" value="Psat1g099200"/>
</dbReference>
<dbReference type="EnsemblPlants" id="Psat7g033720.1">
    <property type="protein sequence ID" value="Psat7g033720.1.cds1"/>
    <property type="gene ID" value="Psat7g033720"/>
</dbReference>
<dbReference type="GeneID" id="9073115"/>
<dbReference type="Gramene" id="Psat1g099200.1">
    <property type="protein sequence ID" value="Psat1g099200.1.cds1"/>
    <property type="gene ID" value="Psat1g099200"/>
</dbReference>
<dbReference type="Gramene" id="Psat7g033720.1">
    <property type="protein sequence ID" value="Psat7g033720.1.cds1"/>
    <property type="gene ID" value="Psat7g033720"/>
</dbReference>
<dbReference type="EvolutionaryTrace" id="P08212"/>
<dbReference type="GO" id="GO:0009535">
    <property type="term" value="C:chloroplast thylakoid membrane"/>
    <property type="evidence" value="ECO:0007669"/>
    <property type="project" value="UniProtKB-SubCell"/>
</dbReference>
<dbReference type="GO" id="GO:0045259">
    <property type="term" value="C:proton-transporting ATP synthase complex"/>
    <property type="evidence" value="ECO:0007669"/>
    <property type="project" value="UniProtKB-KW"/>
</dbReference>
<dbReference type="GO" id="GO:0033177">
    <property type="term" value="C:proton-transporting two-sector ATPase complex, proton-transporting domain"/>
    <property type="evidence" value="ECO:0007669"/>
    <property type="project" value="InterPro"/>
</dbReference>
<dbReference type="GO" id="GO:0008289">
    <property type="term" value="F:lipid binding"/>
    <property type="evidence" value="ECO:0007669"/>
    <property type="project" value="UniProtKB-KW"/>
</dbReference>
<dbReference type="GO" id="GO:0046933">
    <property type="term" value="F:proton-transporting ATP synthase activity, rotational mechanism"/>
    <property type="evidence" value="ECO:0007669"/>
    <property type="project" value="UniProtKB-UniRule"/>
</dbReference>
<dbReference type="CDD" id="cd18183">
    <property type="entry name" value="ATP-synt_Fo_c_ATPH"/>
    <property type="match status" value="1"/>
</dbReference>
<dbReference type="FunFam" id="1.20.20.10:FF:000001">
    <property type="entry name" value="ATP synthase subunit c, chloroplastic"/>
    <property type="match status" value="1"/>
</dbReference>
<dbReference type="Gene3D" id="1.20.20.10">
    <property type="entry name" value="F1F0 ATP synthase subunit C"/>
    <property type="match status" value="1"/>
</dbReference>
<dbReference type="HAMAP" id="MF_01396">
    <property type="entry name" value="ATP_synth_c_bact"/>
    <property type="match status" value="1"/>
</dbReference>
<dbReference type="InterPro" id="IPR005953">
    <property type="entry name" value="ATP_synth_csu_bac/chlpt"/>
</dbReference>
<dbReference type="InterPro" id="IPR000454">
    <property type="entry name" value="ATP_synth_F0_csu"/>
</dbReference>
<dbReference type="InterPro" id="IPR020537">
    <property type="entry name" value="ATP_synth_F0_csu_DDCD_BS"/>
</dbReference>
<dbReference type="InterPro" id="IPR038662">
    <property type="entry name" value="ATP_synth_F0_csu_sf"/>
</dbReference>
<dbReference type="InterPro" id="IPR002379">
    <property type="entry name" value="ATPase_proteolipid_c-like_dom"/>
</dbReference>
<dbReference type="InterPro" id="IPR035921">
    <property type="entry name" value="F/V-ATP_Csub_sf"/>
</dbReference>
<dbReference type="NCBIfam" id="TIGR01260">
    <property type="entry name" value="ATP_synt_c"/>
    <property type="match status" value="1"/>
</dbReference>
<dbReference type="NCBIfam" id="NF005608">
    <property type="entry name" value="PRK07354.1"/>
    <property type="match status" value="1"/>
</dbReference>
<dbReference type="PANTHER" id="PTHR10031">
    <property type="entry name" value="ATP SYNTHASE LIPID-BINDING PROTEIN, MITOCHONDRIAL"/>
    <property type="match status" value="1"/>
</dbReference>
<dbReference type="PANTHER" id="PTHR10031:SF48">
    <property type="entry name" value="ATP SYNTHASE SUBUNIT C, CHLOROPLASTIC"/>
    <property type="match status" value="1"/>
</dbReference>
<dbReference type="Pfam" id="PF00137">
    <property type="entry name" value="ATP-synt_C"/>
    <property type="match status" value="1"/>
</dbReference>
<dbReference type="PRINTS" id="PR00124">
    <property type="entry name" value="ATPASEC"/>
</dbReference>
<dbReference type="SUPFAM" id="SSF81333">
    <property type="entry name" value="F1F0 ATP synthase subunit C"/>
    <property type="match status" value="1"/>
</dbReference>
<dbReference type="PROSITE" id="PS00605">
    <property type="entry name" value="ATPASE_C"/>
    <property type="match status" value="1"/>
</dbReference>
<evidence type="ECO:0000255" key="1">
    <source>
        <dbReference type="HAMAP-Rule" id="MF_01396"/>
    </source>
</evidence>
<evidence type="ECO:0007829" key="2">
    <source>
        <dbReference type="PDB" id="3V3C"/>
    </source>
</evidence>